<accession>B4ULH7</accession>
<dbReference type="EC" id="2.7.2.8" evidence="1"/>
<dbReference type="EMBL" id="CP001131">
    <property type="protein sequence ID" value="ACG71424.1"/>
    <property type="molecule type" value="Genomic_DNA"/>
</dbReference>
<dbReference type="RefSeq" id="WP_012524260.1">
    <property type="nucleotide sequence ID" value="NC_011145.1"/>
</dbReference>
<dbReference type="SMR" id="B4ULH7"/>
<dbReference type="KEGG" id="ank:AnaeK_0181"/>
<dbReference type="HOGENOM" id="CLU_053680_0_0_7"/>
<dbReference type="OrthoDB" id="9803155at2"/>
<dbReference type="UniPathway" id="UPA00068">
    <property type="reaction ID" value="UER00107"/>
</dbReference>
<dbReference type="Proteomes" id="UP000001871">
    <property type="component" value="Chromosome"/>
</dbReference>
<dbReference type="GO" id="GO:0005737">
    <property type="term" value="C:cytoplasm"/>
    <property type="evidence" value="ECO:0007669"/>
    <property type="project" value="UniProtKB-SubCell"/>
</dbReference>
<dbReference type="GO" id="GO:0003991">
    <property type="term" value="F:acetylglutamate kinase activity"/>
    <property type="evidence" value="ECO:0007669"/>
    <property type="project" value="UniProtKB-UniRule"/>
</dbReference>
<dbReference type="GO" id="GO:0005524">
    <property type="term" value="F:ATP binding"/>
    <property type="evidence" value="ECO:0007669"/>
    <property type="project" value="UniProtKB-UniRule"/>
</dbReference>
<dbReference type="GO" id="GO:0042450">
    <property type="term" value="P:arginine biosynthetic process via ornithine"/>
    <property type="evidence" value="ECO:0007669"/>
    <property type="project" value="UniProtKB-UniRule"/>
</dbReference>
<dbReference type="GO" id="GO:0006526">
    <property type="term" value="P:L-arginine biosynthetic process"/>
    <property type="evidence" value="ECO:0007669"/>
    <property type="project" value="UniProtKB-UniPathway"/>
</dbReference>
<dbReference type="CDD" id="cd04238">
    <property type="entry name" value="AAK_NAGK-like"/>
    <property type="match status" value="1"/>
</dbReference>
<dbReference type="Gene3D" id="3.40.1160.10">
    <property type="entry name" value="Acetylglutamate kinase-like"/>
    <property type="match status" value="1"/>
</dbReference>
<dbReference type="HAMAP" id="MF_00082">
    <property type="entry name" value="ArgB"/>
    <property type="match status" value="1"/>
</dbReference>
<dbReference type="InterPro" id="IPR036393">
    <property type="entry name" value="AceGlu_kinase-like_sf"/>
</dbReference>
<dbReference type="InterPro" id="IPR004662">
    <property type="entry name" value="AcgluKinase_fam"/>
</dbReference>
<dbReference type="InterPro" id="IPR037528">
    <property type="entry name" value="ArgB"/>
</dbReference>
<dbReference type="InterPro" id="IPR001048">
    <property type="entry name" value="Asp/Glu/Uridylate_kinase"/>
</dbReference>
<dbReference type="NCBIfam" id="TIGR00761">
    <property type="entry name" value="argB"/>
    <property type="match status" value="1"/>
</dbReference>
<dbReference type="PANTHER" id="PTHR23342">
    <property type="entry name" value="N-ACETYLGLUTAMATE SYNTHASE"/>
    <property type="match status" value="1"/>
</dbReference>
<dbReference type="PANTHER" id="PTHR23342:SF0">
    <property type="entry name" value="N-ACETYLGLUTAMATE SYNTHASE, MITOCHONDRIAL"/>
    <property type="match status" value="1"/>
</dbReference>
<dbReference type="Pfam" id="PF00696">
    <property type="entry name" value="AA_kinase"/>
    <property type="match status" value="1"/>
</dbReference>
<dbReference type="PIRSF" id="PIRSF000728">
    <property type="entry name" value="NAGK"/>
    <property type="match status" value="1"/>
</dbReference>
<dbReference type="SUPFAM" id="SSF53633">
    <property type="entry name" value="Carbamate kinase-like"/>
    <property type="match status" value="1"/>
</dbReference>
<evidence type="ECO:0000255" key="1">
    <source>
        <dbReference type="HAMAP-Rule" id="MF_00082"/>
    </source>
</evidence>
<organism>
    <name type="scientific">Anaeromyxobacter sp. (strain K)</name>
    <dbReference type="NCBI Taxonomy" id="447217"/>
    <lineage>
        <taxon>Bacteria</taxon>
        <taxon>Pseudomonadati</taxon>
        <taxon>Myxococcota</taxon>
        <taxon>Myxococcia</taxon>
        <taxon>Myxococcales</taxon>
        <taxon>Cystobacterineae</taxon>
        <taxon>Anaeromyxobacteraceae</taxon>
        <taxon>Anaeromyxobacter</taxon>
    </lineage>
</organism>
<feature type="chain" id="PRO_1000117114" description="Acetylglutamate kinase">
    <location>
        <begin position="1"/>
        <end position="272"/>
    </location>
</feature>
<feature type="binding site" evidence="1">
    <location>
        <begin position="41"/>
        <end position="42"/>
    </location>
    <ligand>
        <name>substrate</name>
    </ligand>
</feature>
<feature type="binding site" evidence="1">
    <location>
        <position position="63"/>
    </location>
    <ligand>
        <name>substrate</name>
    </ligand>
</feature>
<feature type="binding site" evidence="1">
    <location>
        <position position="166"/>
    </location>
    <ligand>
        <name>substrate</name>
    </ligand>
</feature>
<feature type="site" description="Transition state stabilizer" evidence="1">
    <location>
        <position position="7"/>
    </location>
</feature>
<feature type="site" description="Transition state stabilizer" evidence="1">
    <location>
        <position position="229"/>
    </location>
</feature>
<comment type="function">
    <text evidence="1">Catalyzes the ATP-dependent phosphorylation of N-acetyl-L-glutamate.</text>
</comment>
<comment type="catalytic activity">
    <reaction evidence="1">
        <text>N-acetyl-L-glutamate + ATP = N-acetyl-L-glutamyl 5-phosphate + ADP</text>
        <dbReference type="Rhea" id="RHEA:14629"/>
        <dbReference type="ChEBI" id="CHEBI:30616"/>
        <dbReference type="ChEBI" id="CHEBI:44337"/>
        <dbReference type="ChEBI" id="CHEBI:57936"/>
        <dbReference type="ChEBI" id="CHEBI:456216"/>
        <dbReference type="EC" id="2.7.2.8"/>
    </reaction>
</comment>
<comment type="pathway">
    <text evidence="1">Amino-acid biosynthesis; L-arginine biosynthesis; N(2)-acetyl-L-ornithine from L-glutamate: step 2/4.</text>
</comment>
<comment type="subcellular location">
    <subcellularLocation>
        <location evidence="1">Cytoplasm</location>
    </subcellularLocation>
</comment>
<comment type="similarity">
    <text evidence="1">Belongs to the acetylglutamate kinase family. ArgB subfamily.</text>
</comment>
<proteinExistence type="inferred from homology"/>
<reference key="1">
    <citation type="submission" date="2008-08" db="EMBL/GenBank/DDBJ databases">
        <title>Complete sequence of Anaeromyxobacter sp. K.</title>
        <authorList>
            <consortium name="US DOE Joint Genome Institute"/>
            <person name="Lucas S."/>
            <person name="Copeland A."/>
            <person name="Lapidus A."/>
            <person name="Glavina del Rio T."/>
            <person name="Dalin E."/>
            <person name="Tice H."/>
            <person name="Bruce D."/>
            <person name="Goodwin L."/>
            <person name="Pitluck S."/>
            <person name="Saunders E."/>
            <person name="Brettin T."/>
            <person name="Detter J.C."/>
            <person name="Han C."/>
            <person name="Larimer F."/>
            <person name="Land M."/>
            <person name="Hauser L."/>
            <person name="Kyrpides N."/>
            <person name="Ovchinnikiva G."/>
            <person name="Beliaev A."/>
        </authorList>
    </citation>
    <scope>NUCLEOTIDE SEQUENCE [LARGE SCALE GENOMIC DNA]</scope>
    <source>
        <strain>K</strain>
    </source>
</reference>
<keyword id="KW-0028">Amino-acid biosynthesis</keyword>
<keyword id="KW-0055">Arginine biosynthesis</keyword>
<keyword id="KW-0067">ATP-binding</keyword>
<keyword id="KW-0963">Cytoplasm</keyword>
<keyword id="KW-0418">Kinase</keyword>
<keyword id="KW-0547">Nucleotide-binding</keyword>
<keyword id="KW-0808">Transferase</keyword>
<sequence length="272" mass="28525">MKTIVLKLGGEIVHSPELDLVARDLRTLVDGWNRVAIVHGGGPQATALQKRLGLETRMVAGRRFTDEATLEVMKYVVAGRLNVDLCGRLLANGVMPVGLHGASGHAIQATRRPPRVMQGAGPEPVDLGLVGDVVGFNLPLLGDLFERRYVPVLACLGCDDAGQALNINGDTVASQLAGALRADALVLVTSTPGVLRDVKDPSSRIPRITRAEFERLVADGTISGGMIPKLEESFEVLRGGARSVVILGKLAPGDLEAAVLEPGSAGTVLVGE</sequence>
<name>ARGB_ANASK</name>
<gene>
    <name evidence="1" type="primary">argB</name>
    <name type="ordered locus">AnaeK_0181</name>
</gene>
<protein>
    <recommendedName>
        <fullName evidence="1">Acetylglutamate kinase</fullName>
        <ecNumber evidence="1">2.7.2.8</ecNumber>
    </recommendedName>
    <alternativeName>
        <fullName evidence="1">N-acetyl-L-glutamate 5-phosphotransferase</fullName>
    </alternativeName>
    <alternativeName>
        <fullName evidence="1">NAG kinase</fullName>
        <shortName evidence="1">NAGK</shortName>
    </alternativeName>
</protein>